<dbReference type="EC" id="1.5.1.2" evidence="1"/>
<dbReference type="EMBL" id="D84432">
    <property type="protein sequence ID" value="BAA12621.1"/>
    <property type="molecule type" value="Genomic_DNA"/>
</dbReference>
<dbReference type="EMBL" id="AL009126">
    <property type="protein sequence ID" value="CAB14312.1"/>
    <property type="molecule type" value="Genomic_DNA"/>
</dbReference>
<dbReference type="PIR" id="G69964">
    <property type="entry name" value="G69964"/>
</dbReference>
<dbReference type="RefSeq" id="NP_390261.1">
    <property type="nucleotide sequence ID" value="NC_000964.3"/>
</dbReference>
<dbReference type="SMR" id="P54552"/>
<dbReference type="FunCoup" id="P54552">
    <property type="interactions" value="665"/>
</dbReference>
<dbReference type="STRING" id="224308.BSU23800"/>
<dbReference type="PaxDb" id="224308-BSU23800"/>
<dbReference type="EnsemblBacteria" id="CAB14312">
    <property type="protein sequence ID" value="CAB14312"/>
    <property type="gene ID" value="BSU_23800"/>
</dbReference>
<dbReference type="GeneID" id="938697"/>
<dbReference type="KEGG" id="bsu:BSU23800"/>
<dbReference type="PATRIC" id="fig|224308.179.peg.2593"/>
<dbReference type="eggNOG" id="COG0345">
    <property type="taxonomic scope" value="Bacteria"/>
</dbReference>
<dbReference type="InParanoid" id="P54552"/>
<dbReference type="OrthoDB" id="9805754at2"/>
<dbReference type="PhylomeDB" id="P54552"/>
<dbReference type="BioCyc" id="BSUB:BSU23800-MONOMER"/>
<dbReference type="UniPathway" id="UPA00098">
    <property type="reaction ID" value="UER00361"/>
</dbReference>
<dbReference type="Proteomes" id="UP000001570">
    <property type="component" value="Chromosome"/>
</dbReference>
<dbReference type="GO" id="GO:0005737">
    <property type="term" value="C:cytoplasm"/>
    <property type="evidence" value="ECO:0007669"/>
    <property type="project" value="UniProtKB-SubCell"/>
</dbReference>
<dbReference type="GO" id="GO:0004735">
    <property type="term" value="F:pyrroline-5-carboxylate reductase activity"/>
    <property type="evidence" value="ECO:0000318"/>
    <property type="project" value="GO_Central"/>
</dbReference>
<dbReference type="GO" id="GO:0055129">
    <property type="term" value="P:L-proline biosynthetic process"/>
    <property type="evidence" value="ECO:0000318"/>
    <property type="project" value="GO_Central"/>
</dbReference>
<dbReference type="FunFam" id="1.10.3730.10:FF:000001">
    <property type="entry name" value="Pyrroline-5-carboxylate reductase"/>
    <property type="match status" value="1"/>
</dbReference>
<dbReference type="Gene3D" id="3.40.50.720">
    <property type="entry name" value="NAD(P)-binding Rossmann-like Domain"/>
    <property type="match status" value="1"/>
</dbReference>
<dbReference type="Gene3D" id="1.10.3730.10">
    <property type="entry name" value="ProC C-terminal domain-like"/>
    <property type="match status" value="1"/>
</dbReference>
<dbReference type="HAMAP" id="MF_01925">
    <property type="entry name" value="P5C_reductase"/>
    <property type="match status" value="1"/>
</dbReference>
<dbReference type="InterPro" id="IPR008927">
    <property type="entry name" value="6-PGluconate_DH-like_C_sf"/>
</dbReference>
<dbReference type="InterPro" id="IPR036291">
    <property type="entry name" value="NAD(P)-bd_dom_sf"/>
</dbReference>
<dbReference type="InterPro" id="IPR028939">
    <property type="entry name" value="P5C_Rdtase_cat_N"/>
</dbReference>
<dbReference type="InterPro" id="IPR053790">
    <property type="entry name" value="P5CR-like_CS"/>
</dbReference>
<dbReference type="InterPro" id="IPR029036">
    <property type="entry name" value="P5CR_dimer"/>
</dbReference>
<dbReference type="InterPro" id="IPR000304">
    <property type="entry name" value="Pyrroline-COOH_reductase"/>
</dbReference>
<dbReference type="NCBIfam" id="TIGR00112">
    <property type="entry name" value="proC"/>
    <property type="match status" value="1"/>
</dbReference>
<dbReference type="PANTHER" id="PTHR11645">
    <property type="entry name" value="PYRROLINE-5-CARBOXYLATE REDUCTASE"/>
    <property type="match status" value="1"/>
</dbReference>
<dbReference type="PANTHER" id="PTHR11645:SF49">
    <property type="entry name" value="PYRROLINE-5-CARBOXYLATE REDUCTASE 1"/>
    <property type="match status" value="1"/>
</dbReference>
<dbReference type="Pfam" id="PF03807">
    <property type="entry name" value="F420_oxidored"/>
    <property type="match status" value="1"/>
</dbReference>
<dbReference type="Pfam" id="PF14748">
    <property type="entry name" value="P5CR_dimer"/>
    <property type="match status" value="1"/>
</dbReference>
<dbReference type="PIRSF" id="PIRSF000193">
    <property type="entry name" value="Pyrrol-5-carb_rd"/>
    <property type="match status" value="1"/>
</dbReference>
<dbReference type="SUPFAM" id="SSF48179">
    <property type="entry name" value="6-phosphogluconate dehydrogenase C-terminal domain-like"/>
    <property type="match status" value="1"/>
</dbReference>
<dbReference type="SUPFAM" id="SSF51735">
    <property type="entry name" value="NAD(P)-binding Rossmann-fold domains"/>
    <property type="match status" value="1"/>
</dbReference>
<dbReference type="PROSITE" id="PS00521">
    <property type="entry name" value="P5CR"/>
    <property type="match status" value="1"/>
</dbReference>
<protein>
    <recommendedName>
        <fullName evidence="1">Pyrroline-5-carboxylate reductase 2</fullName>
        <shortName evidence="1">P5C reductase 2</shortName>
        <shortName evidence="1">P5CR 2</shortName>
        <ecNumber evidence="1">1.5.1.2</ecNumber>
    </recommendedName>
    <alternativeName>
        <fullName evidence="1">PCA reductase 2</fullName>
    </alternativeName>
</protein>
<keyword id="KW-0028">Amino-acid biosynthesis</keyword>
<keyword id="KW-0963">Cytoplasm</keyword>
<keyword id="KW-0521">NADP</keyword>
<keyword id="KW-0560">Oxidoreductase</keyword>
<keyword id="KW-0641">Proline biosynthesis</keyword>
<keyword id="KW-1185">Reference proteome</keyword>
<name>P5CR2_BACSU</name>
<organism>
    <name type="scientific">Bacillus subtilis (strain 168)</name>
    <dbReference type="NCBI Taxonomy" id="224308"/>
    <lineage>
        <taxon>Bacteria</taxon>
        <taxon>Bacillati</taxon>
        <taxon>Bacillota</taxon>
        <taxon>Bacilli</taxon>
        <taxon>Bacillales</taxon>
        <taxon>Bacillaceae</taxon>
        <taxon>Bacillus</taxon>
    </lineage>
</organism>
<reference key="1">
    <citation type="journal article" date="1996" name="Microbiology">
        <title>Systematic sequencing of the 283 kb 210 degrees-232 degrees region of the Bacillus subtilis genome containing the skin element and many sporulation genes.</title>
        <authorList>
            <person name="Mizuno M."/>
            <person name="Masuda S."/>
            <person name="Takemaru K."/>
            <person name="Hosono S."/>
            <person name="Sato T."/>
            <person name="Takeuchi M."/>
            <person name="Kobayashi Y."/>
        </authorList>
    </citation>
    <scope>NUCLEOTIDE SEQUENCE [GENOMIC DNA]</scope>
    <source>
        <strain>168 / JH642</strain>
    </source>
</reference>
<reference key="2">
    <citation type="journal article" date="1997" name="Nature">
        <title>The complete genome sequence of the Gram-positive bacterium Bacillus subtilis.</title>
        <authorList>
            <person name="Kunst F."/>
            <person name="Ogasawara N."/>
            <person name="Moszer I."/>
            <person name="Albertini A.M."/>
            <person name="Alloni G."/>
            <person name="Azevedo V."/>
            <person name="Bertero M.G."/>
            <person name="Bessieres P."/>
            <person name="Bolotin A."/>
            <person name="Borchert S."/>
            <person name="Borriss R."/>
            <person name="Boursier L."/>
            <person name="Brans A."/>
            <person name="Braun M."/>
            <person name="Brignell S.C."/>
            <person name="Bron S."/>
            <person name="Brouillet S."/>
            <person name="Bruschi C.V."/>
            <person name="Caldwell B."/>
            <person name="Capuano V."/>
            <person name="Carter N.M."/>
            <person name="Choi S.-K."/>
            <person name="Codani J.-J."/>
            <person name="Connerton I.F."/>
            <person name="Cummings N.J."/>
            <person name="Daniel R.A."/>
            <person name="Denizot F."/>
            <person name="Devine K.M."/>
            <person name="Duesterhoeft A."/>
            <person name="Ehrlich S.D."/>
            <person name="Emmerson P.T."/>
            <person name="Entian K.-D."/>
            <person name="Errington J."/>
            <person name="Fabret C."/>
            <person name="Ferrari E."/>
            <person name="Foulger D."/>
            <person name="Fritz C."/>
            <person name="Fujita M."/>
            <person name="Fujita Y."/>
            <person name="Fuma S."/>
            <person name="Galizzi A."/>
            <person name="Galleron N."/>
            <person name="Ghim S.-Y."/>
            <person name="Glaser P."/>
            <person name="Goffeau A."/>
            <person name="Golightly E.J."/>
            <person name="Grandi G."/>
            <person name="Guiseppi G."/>
            <person name="Guy B.J."/>
            <person name="Haga K."/>
            <person name="Haiech J."/>
            <person name="Harwood C.R."/>
            <person name="Henaut A."/>
            <person name="Hilbert H."/>
            <person name="Holsappel S."/>
            <person name="Hosono S."/>
            <person name="Hullo M.-F."/>
            <person name="Itaya M."/>
            <person name="Jones L.-M."/>
            <person name="Joris B."/>
            <person name="Karamata D."/>
            <person name="Kasahara Y."/>
            <person name="Klaerr-Blanchard M."/>
            <person name="Klein C."/>
            <person name="Kobayashi Y."/>
            <person name="Koetter P."/>
            <person name="Koningstein G."/>
            <person name="Krogh S."/>
            <person name="Kumano M."/>
            <person name="Kurita K."/>
            <person name="Lapidus A."/>
            <person name="Lardinois S."/>
            <person name="Lauber J."/>
            <person name="Lazarevic V."/>
            <person name="Lee S.-M."/>
            <person name="Levine A."/>
            <person name="Liu H."/>
            <person name="Masuda S."/>
            <person name="Mauel C."/>
            <person name="Medigue C."/>
            <person name="Medina N."/>
            <person name="Mellado R.P."/>
            <person name="Mizuno M."/>
            <person name="Moestl D."/>
            <person name="Nakai S."/>
            <person name="Noback M."/>
            <person name="Noone D."/>
            <person name="O'Reilly M."/>
            <person name="Ogawa K."/>
            <person name="Ogiwara A."/>
            <person name="Oudega B."/>
            <person name="Park S.-H."/>
            <person name="Parro V."/>
            <person name="Pohl T.M."/>
            <person name="Portetelle D."/>
            <person name="Porwollik S."/>
            <person name="Prescott A.M."/>
            <person name="Presecan E."/>
            <person name="Pujic P."/>
            <person name="Purnelle B."/>
            <person name="Rapoport G."/>
            <person name="Rey M."/>
            <person name="Reynolds S."/>
            <person name="Rieger M."/>
            <person name="Rivolta C."/>
            <person name="Rocha E."/>
            <person name="Roche B."/>
            <person name="Rose M."/>
            <person name="Sadaie Y."/>
            <person name="Sato T."/>
            <person name="Scanlan E."/>
            <person name="Schleich S."/>
            <person name="Schroeter R."/>
            <person name="Scoffone F."/>
            <person name="Sekiguchi J."/>
            <person name="Sekowska A."/>
            <person name="Seror S.J."/>
            <person name="Serror P."/>
            <person name="Shin B.-S."/>
            <person name="Soldo B."/>
            <person name="Sorokin A."/>
            <person name="Tacconi E."/>
            <person name="Takagi T."/>
            <person name="Takahashi H."/>
            <person name="Takemaru K."/>
            <person name="Takeuchi M."/>
            <person name="Tamakoshi A."/>
            <person name="Tanaka T."/>
            <person name="Terpstra P."/>
            <person name="Tognoni A."/>
            <person name="Tosato V."/>
            <person name="Uchiyama S."/>
            <person name="Vandenbol M."/>
            <person name="Vannier F."/>
            <person name="Vassarotti A."/>
            <person name="Viari A."/>
            <person name="Wambutt R."/>
            <person name="Wedler E."/>
            <person name="Wedler H."/>
            <person name="Weitzenegger T."/>
            <person name="Winters P."/>
            <person name="Wipat A."/>
            <person name="Yamamoto H."/>
            <person name="Yamane K."/>
            <person name="Yasumoto K."/>
            <person name="Yata K."/>
            <person name="Yoshida K."/>
            <person name="Yoshikawa H.-F."/>
            <person name="Zumstein E."/>
            <person name="Yoshikawa H."/>
            <person name="Danchin A."/>
        </authorList>
    </citation>
    <scope>NUCLEOTIDE SEQUENCE [LARGE SCALE GENOMIC DNA]</scope>
    <source>
        <strain>168</strain>
    </source>
</reference>
<reference key="3">
    <citation type="journal article" date="2001" name="J. Bacteriol.">
        <title>Multiple genes for the last step of proline biosynthesis in Bacillus subtilis.</title>
        <authorList>
            <person name="Belitsky B.R."/>
            <person name="Brill J."/>
            <person name="Bremer E."/>
            <person name="Sonenshein A.L."/>
        </authorList>
    </citation>
    <scope>FUNCTION</scope>
    <scope>PATHWAY</scope>
    <scope>DISRUPTION PHENOTYPE</scope>
</reference>
<sequence length="278" mass="30396">MKKIGFVGAGSMAEAMINGILQSGITKPEHIYITNRSNDERLIELKETYSVRPCRDKNEFFTHTDIIILAFKPKDAAESIDSIRPYIKDQLVISVLAGLTIETIQHYFGRKLAVIRVMPNTSAAIRKSATGFSVSTEASKNDIIAAKALLETIGDATLVEERHLDAVTAIAGSGPAYVYRYIEAMEKAAQKVGLDKETAKALILQTMAGATDMLLQSGKQPEKLRKEITSPGGTTEAGLRALQDSRFEEAIIHCIEETAKRSAEIKEQFAGAALERHS</sequence>
<accession>P54552</accession>
<feature type="chain" id="PRO_0000187286" description="Pyrroline-5-carboxylate reductase 2">
    <location>
        <begin position="1"/>
        <end position="278"/>
    </location>
</feature>
<evidence type="ECO:0000255" key="1">
    <source>
        <dbReference type="HAMAP-Rule" id="MF_01925"/>
    </source>
</evidence>
<evidence type="ECO:0000269" key="2">
    <source>
    </source>
</evidence>
<evidence type="ECO:0000305" key="3">
    <source>
    </source>
</evidence>
<proteinExistence type="inferred from homology"/>
<comment type="function">
    <text evidence="3">Catalyzes the reduction of 1-pyrroline-5-carboxylate (PCA) to L-proline.</text>
</comment>
<comment type="catalytic activity">
    <reaction evidence="1">
        <text>L-proline + NADP(+) = (S)-1-pyrroline-5-carboxylate + NADPH + 2 H(+)</text>
        <dbReference type="Rhea" id="RHEA:14109"/>
        <dbReference type="ChEBI" id="CHEBI:15378"/>
        <dbReference type="ChEBI" id="CHEBI:17388"/>
        <dbReference type="ChEBI" id="CHEBI:57783"/>
        <dbReference type="ChEBI" id="CHEBI:58349"/>
        <dbReference type="ChEBI" id="CHEBI:60039"/>
        <dbReference type="EC" id="1.5.1.2"/>
    </reaction>
</comment>
<comment type="catalytic activity">
    <reaction evidence="1">
        <text>L-proline + NAD(+) = (S)-1-pyrroline-5-carboxylate + NADH + 2 H(+)</text>
        <dbReference type="Rhea" id="RHEA:14105"/>
        <dbReference type="ChEBI" id="CHEBI:15378"/>
        <dbReference type="ChEBI" id="CHEBI:17388"/>
        <dbReference type="ChEBI" id="CHEBI:57540"/>
        <dbReference type="ChEBI" id="CHEBI:57945"/>
        <dbReference type="ChEBI" id="CHEBI:60039"/>
        <dbReference type="EC" id="1.5.1.2"/>
    </reaction>
</comment>
<comment type="pathway">
    <text evidence="1 2">Amino-acid biosynthesis; L-proline biosynthesis; L-proline from L-glutamate 5-semialdehyde: step 1/1.</text>
</comment>
<comment type="subcellular location">
    <subcellularLocation>
        <location evidence="1">Cytoplasm</location>
    </subcellularLocation>
</comment>
<comment type="disruption phenotype">
    <text evidence="2">The proG proH proI triple mutant is auxotrophic for proline.</text>
</comment>
<comment type="similarity">
    <text evidence="1">Belongs to the pyrroline-5-carboxylate reductase family.</text>
</comment>
<gene>
    <name type="primary">proI</name>
    <name type="synonym">yqjO</name>
    <name type="ordered locus">BSU23800</name>
</gene>